<name>ORC4_MOUSE</name>
<dbReference type="EMBL" id="Y16386">
    <property type="protein sequence ID" value="CAA76188.1"/>
    <property type="molecule type" value="mRNA"/>
</dbReference>
<dbReference type="EMBL" id="AJ003140">
    <property type="protein sequence ID" value="CAA05896.1"/>
    <property type="molecule type" value="mRNA"/>
</dbReference>
<dbReference type="EMBL" id="AK010258">
    <property type="protein sequence ID" value="BAB26801.1"/>
    <property type="molecule type" value="mRNA"/>
</dbReference>
<dbReference type="EMBL" id="AK147823">
    <property type="protein sequence ID" value="BAE28161.1"/>
    <property type="molecule type" value="mRNA"/>
</dbReference>
<dbReference type="EMBL" id="AK169291">
    <property type="protein sequence ID" value="BAE41048.1"/>
    <property type="molecule type" value="mRNA"/>
</dbReference>
<dbReference type="EMBL" id="AL732317">
    <property type="status" value="NOT_ANNOTATED_CDS"/>
    <property type="molecule type" value="Genomic_DNA"/>
</dbReference>
<dbReference type="EMBL" id="CH466519">
    <property type="protein sequence ID" value="EDL26871.1"/>
    <property type="molecule type" value="Genomic_DNA"/>
</dbReference>
<dbReference type="EMBL" id="BC015072">
    <property type="protein sequence ID" value="AAH15072.1"/>
    <property type="molecule type" value="mRNA"/>
</dbReference>
<dbReference type="EMBL" id="BC019748">
    <property type="protein sequence ID" value="AAH19748.1"/>
    <property type="molecule type" value="mRNA"/>
</dbReference>
<dbReference type="CCDS" id="CCDS16022.1"/>
<dbReference type="RefSeq" id="NP_001342225.1">
    <property type="nucleotide sequence ID" value="NM_001355296.2"/>
</dbReference>
<dbReference type="RefSeq" id="NP_001408193.1">
    <property type="nucleotide sequence ID" value="NM_001421264.1"/>
</dbReference>
<dbReference type="RefSeq" id="NP_001408194.1">
    <property type="nucleotide sequence ID" value="NM_001421265.1"/>
</dbReference>
<dbReference type="RefSeq" id="NP_036088.3">
    <property type="nucleotide sequence ID" value="NM_011958.3"/>
</dbReference>
<dbReference type="RefSeq" id="XP_006498126.1">
    <property type="nucleotide sequence ID" value="XM_006498063.3"/>
</dbReference>
<dbReference type="RefSeq" id="XP_006498127.1">
    <property type="nucleotide sequence ID" value="XM_006498064.3"/>
</dbReference>
<dbReference type="RefSeq" id="XP_006498128.1">
    <property type="nucleotide sequence ID" value="XM_006498065.3"/>
</dbReference>
<dbReference type="SMR" id="O88708"/>
<dbReference type="BioGRID" id="204980">
    <property type="interactions" value="1"/>
</dbReference>
<dbReference type="ComplexPortal" id="CPX-1915">
    <property type="entry name" value="Nuclear origin recognition complex"/>
</dbReference>
<dbReference type="CORUM" id="O88708"/>
<dbReference type="FunCoup" id="O88708">
    <property type="interactions" value="4204"/>
</dbReference>
<dbReference type="STRING" id="10090.ENSMUSP00000028098"/>
<dbReference type="iPTMnet" id="O88708"/>
<dbReference type="PhosphoSitePlus" id="O88708"/>
<dbReference type="jPOST" id="O88708"/>
<dbReference type="PaxDb" id="10090-ENSMUSP00000028098"/>
<dbReference type="PeptideAtlas" id="O88708"/>
<dbReference type="ProteomicsDB" id="293521"/>
<dbReference type="Pumba" id="O88708"/>
<dbReference type="Antibodypedia" id="4189">
    <property type="antibodies" value="242 antibodies from 32 providers"/>
</dbReference>
<dbReference type="DNASU" id="26428"/>
<dbReference type="Ensembl" id="ENSMUST00000028098.11">
    <property type="protein sequence ID" value="ENSMUSP00000028098.5"/>
    <property type="gene ID" value="ENSMUSG00000026761.13"/>
</dbReference>
<dbReference type="GeneID" id="26428"/>
<dbReference type="KEGG" id="mmu:26428"/>
<dbReference type="UCSC" id="uc008jpp.2">
    <property type="organism name" value="mouse"/>
</dbReference>
<dbReference type="AGR" id="MGI:1347043"/>
<dbReference type="CTD" id="5000"/>
<dbReference type="MGI" id="MGI:1347043">
    <property type="gene designation" value="Orc4"/>
</dbReference>
<dbReference type="VEuPathDB" id="HostDB:ENSMUSG00000026761"/>
<dbReference type="eggNOG" id="KOG2228">
    <property type="taxonomic scope" value="Eukaryota"/>
</dbReference>
<dbReference type="GeneTree" id="ENSGT00390000016542"/>
<dbReference type="HOGENOM" id="CLU_007115_0_1_1"/>
<dbReference type="InParanoid" id="O88708"/>
<dbReference type="OMA" id="AFTFQRN"/>
<dbReference type="OrthoDB" id="343623at2759"/>
<dbReference type="PhylomeDB" id="O88708"/>
<dbReference type="TreeFam" id="TF101094"/>
<dbReference type="Reactome" id="R-MMU-176187">
    <property type="pathway name" value="Activation of ATR in response to replication stress"/>
</dbReference>
<dbReference type="Reactome" id="R-MMU-68616">
    <property type="pathway name" value="Assembly of the ORC complex at the origin of replication"/>
</dbReference>
<dbReference type="Reactome" id="R-MMU-68689">
    <property type="pathway name" value="CDC6 association with the ORC:origin complex"/>
</dbReference>
<dbReference type="Reactome" id="R-MMU-68949">
    <property type="pathway name" value="Orc1 removal from chromatin"/>
</dbReference>
<dbReference type="Reactome" id="R-MMU-68962">
    <property type="pathway name" value="Activation of the pre-replicative complex"/>
</dbReference>
<dbReference type="BioGRID-ORCS" id="26428">
    <property type="hits" value="27 hits in 78 CRISPR screens"/>
</dbReference>
<dbReference type="CD-CODE" id="01CA17F3">
    <property type="entry name" value="Centrosome"/>
</dbReference>
<dbReference type="ChiTaRS" id="Orc4">
    <property type="organism name" value="mouse"/>
</dbReference>
<dbReference type="PRO" id="PR:O88708"/>
<dbReference type="Proteomes" id="UP000000589">
    <property type="component" value="Chromosome 2"/>
</dbReference>
<dbReference type="RNAct" id="O88708">
    <property type="molecule type" value="protein"/>
</dbReference>
<dbReference type="Bgee" id="ENSMUSG00000026761">
    <property type="expression patterns" value="Expressed in otic placode and 267 other cell types or tissues"/>
</dbReference>
<dbReference type="ExpressionAtlas" id="O88708">
    <property type="expression patterns" value="baseline and differential"/>
</dbReference>
<dbReference type="GO" id="GO:0000781">
    <property type="term" value="C:chromosome, telomeric region"/>
    <property type="evidence" value="ECO:0007669"/>
    <property type="project" value="Ensembl"/>
</dbReference>
<dbReference type="GO" id="GO:0005737">
    <property type="term" value="C:cytoplasm"/>
    <property type="evidence" value="ECO:0000314"/>
    <property type="project" value="MGI"/>
</dbReference>
<dbReference type="GO" id="GO:0005829">
    <property type="term" value="C:cytosol"/>
    <property type="evidence" value="ECO:0007669"/>
    <property type="project" value="Ensembl"/>
</dbReference>
<dbReference type="GO" id="GO:0005664">
    <property type="term" value="C:nuclear origin of replication recognition complex"/>
    <property type="evidence" value="ECO:0000250"/>
    <property type="project" value="UniProtKB"/>
</dbReference>
<dbReference type="GO" id="GO:0005730">
    <property type="term" value="C:nucleolus"/>
    <property type="evidence" value="ECO:0007669"/>
    <property type="project" value="Ensembl"/>
</dbReference>
<dbReference type="GO" id="GO:0005654">
    <property type="term" value="C:nucleoplasm"/>
    <property type="evidence" value="ECO:0007669"/>
    <property type="project" value="Ensembl"/>
</dbReference>
<dbReference type="GO" id="GO:0005524">
    <property type="term" value="F:ATP binding"/>
    <property type="evidence" value="ECO:0007669"/>
    <property type="project" value="UniProtKB-KW"/>
</dbReference>
<dbReference type="GO" id="GO:0016887">
    <property type="term" value="F:ATP hydrolysis activity"/>
    <property type="evidence" value="ECO:0007669"/>
    <property type="project" value="InterPro"/>
</dbReference>
<dbReference type="GO" id="GO:0003688">
    <property type="term" value="F:DNA replication origin binding"/>
    <property type="evidence" value="ECO:0007669"/>
    <property type="project" value="Ensembl"/>
</dbReference>
<dbReference type="GO" id="GO:0006260">
    <property type="term" value="P:DNA replication"/>
    <property type="evidence" value="ECO:0000315"/>
    <property type="project" value="MGI"/>
</dbReference>
<dbReference type="GO" id="GO:0006270">
    <property type="term" value="P:DNA replication initiation"/>
    <property type="evidence" value="ECO:0000266"/>
    <property type="project" value="ComplexPortal"/>
</dbReference>
<dbReference type="GO" id="GO:0040038">
    <property type="term" value="P:polar body extrusion after meiotic divisions"/>
    <property type="evidence" value="ECO:0000315"/>
    <property type="project" value="MGI"/>
</dbReference>
<dbReference type="GO" id="GO:0051258">
    <property type="term" value="P:protein polymerization"/>
    <property type="evidence" value="ECO:0000314"/>
    <property type="project" value="MGI"/>
</dbReference>
<dbReference type="CDD" id="cd00009">
    <property type="entry name" value="AAA"/>
    <property type="match status" value="1"/>
</dbReference>
<dbReference type="FunFam" id="3.40.50.300:FF:000649">
    <property type="entry name" value="Origin recognition complex subunit 4"/>
    <property type="match status" value="1"/>
</dbReference>
<dbReference type="Gene3D" id="3.40.50.300">
    <property type="entry name" value="P-loop containing nucleotide triphosphate hydrolases"/>
    <property type="match status" value="1"/>
</dbReference>
<dbReference type="InterPro" id="IPR003593">
    <property type="entry name" value="AAA+_ATPase"/>
</dbReference>
<dbReference type="InterPro" id="IPR041664">
    <property type="entry name" value="AAA_16"/>
</dbReference>
<dbReference type="InterPro" id="IPR016527">
    <property type="entry name" value="ORC4"/>
</dbReference>
<dbReference type="InterPro" id="IPR032705">
    <property type="entry name" value="ORC4_C"/>
</dbReference>
<dbReference type="InterPro" id="IPR027417">
    <property type="entry name" value="P-loop_NTPase"/>
</dbReference>
<dbReference type="PANTHER" id="PTHR12087">
    <property type="entry name" value="ORIGIN RECOGNITION COMPLEX SUBUNIT 4"/>
    <property type="match status" value="1"/>
</dbReference>
<dbReference type="PANTHER" id="PTHR12087:SF0">
    <property type="entry name" value="ORIGIN RECOGNITION COMPLEX SUBUNIT 4"/>
    <property type="match status" value="1"/>
</dbReference>
<dbReference type="Pfam" id="PF13191">
    <property type="entry name" value="AAA_16"/>
    <property type="match status" value="1"/>
</dbReference>
<dbReference type="Pfam" id="PF14629">
    <property type="entry name" value="ORC4_C"/>
    <property type="match status" value="1"/>
</dbReference>
<dbReference type="PIRSF" id="PIRSF007858">
    <property type="entry name" value="ORC4"/>
    <property type="match status" value="1"/>
</dbReference>
<dbReference type="SMART" id="SM00382">
    <property type="entry name" value="AAA"/>
    <property type="match status" value="1"/>
</dbReference>
<dbReference type="SUPFAM" id="SSF52540">
    <property type="entry name" value="P-loop containing nucleoside triphosphate hydrolases"/>
    <property type="match status" value="1"/>
</dbReference>
<evidence type="ECO:0000250" key="1"/>
<evidence type="ECO:0000250" key="2">
    <source>
        <dbReference type="UniProtKB" id="O43929"/>
    </source>
</evidence>
<evidence type="ECO:0000255" key="3"/>
<evidence type="ECO:0000269" key="4">
    <source>
    </source>
</evidence>
<evidence type="ECO:0000305" key="5"/>
<organism>
    <name type="scientific">Mus musculus</name>
    <name type="common">Mouse</name>
    <dbReference type="NCBI Taxonomy" id="10090"/>
    <lineage>
        <taxon>Eukaryota</taxon>
        <taxon>Metazoa</taxon>
        <taxon>Chordata</taxon>
        <taxon>Craniata</taxon>
        <taxon>Vertebrata</taxon>
        <taxon>Euteleostomi</taxon>
        <taxon>Mammalia</taxon>
        <taxon>Eutheria</taxon>
        <taxon>Euarchontoglires</taxon>
        <taxon>Glires</taxon>
        <taxon>Rodentia</taxon>
        <taxon>Myomorpha</taxon>
        <taxon>Muroidea</taxon>
        <taxon>Muridae</taxon>
        <taxon>Murinae</taxon>
        <taxon>Mus</taxon>
        <taxon>Mus</taxon>
    </lineage>
</organism>
<comment type="function">
    <text evidence="1">Binds histone H3 and H4 trimethylation marks H3K9me3, H3K27me3 and H4K20me3 (By similarity). Component of the origin recognition complex (ORC) that binds origins of replication. DNA-binding is ATP-dependent. The specific DNA sequences that define origins of replication have not been identified yet. ORC is required to assemble the pre-replication complex necessary to initiate DNA replication.</text>
</comment>
<comment type="subunit">
    <text evidence="2 4">Component of ORC, a complex composed of at least 6 subunits: ORC1, ORC2, ORC3, ORC4, ORC5 and ORC6. ORC is regulated in a cell-cycle dependent manner. It is sequentially assembled at the exit from anaphase of mitosis and disassembled as cells enter S phase (By similarity). Interacts with DBF4 (PubMed:12614612). Interacts with POLQ (By similarity).</text>
</comment>
<comment type="subcellular location">
    <subcellularLocation>
        <location>Nucleus</location>
    </subcellularLocation>
</comment>
<comment type="similarity">
    <text evidence="5">Belongs to the ORC4 family.</text>
</comment>
<accession>O88708</accession>
<accession>Q91V62</accession>
<accession>Q9QYX1</accession>
<protein>
    <recommendedName>
        <fullName>Origin recognition complex subunit 4</fullName>
    </recommendedName>
</protein>
<keyword id="KW-0067">ATP-binding</keyword>
<keyword id="KW-0235">DNA replication</keyword>
<keyword id="KW-0238">DNA-binding</keyword>
<keyword id="KW-0488">Methylation</keyword>
<keyword id="KW-0547">Nucleotide-binding</keyword>
<keyword id="KW-0539">Nucleus</keyword>
<keyword id="KW-1185">Reference proteome</keyword>
<proteinExistence type="evidence at protein level"/>
<gene>
    <name type="primary">Orc4</name>
    <name type="synonym">Orc4l</name>
</gene>
<feature type="chain" id="PRO_0000127088" description="Origin recognition complex subunit 4">
    <location>
        <begin position="1"/>
        <end position="433"/>
    </location>
</feature>
<feature type="binding site" evidence="3">
    <location>
        <begin position="65"/>
        <end position="72"/>
    </location>
    <ligand>
        <name>ATP</name>
        <dbReference type="ChEBI" id="CHEBI:30616"/>
    </ligand>
</feature>
<feature type="modified residue" description="N6-methyllysine" evidence="2">
    <location>
        <position position="7"/>
    </location>
</feature>
<feature type="sequence conflict" description="In Ref. 1; CAA76188." evidence="5" ref="1">
    <original>Q</original>
    <variation>K</variation>
    <location>
        <position position="141"/>
    </location>
</feature>
<sequence>MSSRKTKSNAHAECLSQVQRILRERFCHHSPHSNLFGVQVQYKHLIELLKRTAIYGESNSVLIVGPRGSGKTTLLNHALKELMEIEVSENVIQVHLNGLLQTNEKIALKEITRQLNLDNVVEDKVFGSFAENLSFLLEALQKGDRTSSCPVIFILDEFDIFAHQKNQTLLYNLFDISQSAQTPVAVIGLTCRLDILELLEKRVKSRFSHRQIHLMNSFDFPQYLKIFKEQLSLPAEFPDKAFAERWNENVHCLSEDSTVLEVLQKHFSVNKNLQSLHMLLMLALNRVTVSHPFMTSADLMEAQHMCSLDSKANIVHGLSVLEICLIIAMKHLNDIYEEEPFNFQMVYNEFQKFIQRKAHSVYNFEKPVVMKAFEHLQQLELIKPVERTSVNSQREYQLVKLLLDNTQIMNALQKYSNCPTDVRQWATSSLSWL</sequence>
<reference key="1">
    <citation type="submission" date="1998-02" db="EMBL/GenBank/DDBJ databases">
        <title>Identification of the Orc4p and Orc5p subunits of the Xenopus and human origin recognition complex.</title>
        <authorList>
            <person name="Komrskova T."/>
            <person name="Yang H."/>
            <person name="Gavin K."/>
            <person name="Pappin P."/>
            <person name="Canas B."/>
            <person name="Kobayashi R."/>
            <person name="Hunt T."/>
            <person name="Stillman B."/>
        </authorList>
    </citation>
    <scope>NUCLEOTIDE SEQUENCE [MRNA]</scope>
</reference>
<reference key="2">
    <citation type="journal article" date="1999" name="Chromosoma">
        <title>Identification and characterization of MmORC4 and MmORC5, two subunits of the mouse origin of replication recognition complex.</title>
        <authorList>
            <person name="Springer J."/>
            <person name="Kneissl M."/>
            <person name="Putter V."/>
            <person name="Grummt F."/>
        </authorList>
    </citation>
    <scope>NUCLEOTIDE SEQUENCE [MRNA]</scope>
</reference>
<reference key="3">
    <citation type="journal article" date="2005" name="Science">
        <title>The transcriptional landscape of the mammalian genome.</title>
        <authorList>
            <person name="Carninci P."/>
            <person name="Kasukawa T."/>
            <person name="Katayama S."/>
            <person name="Gough J."/>
            <person name="Frith M.C."/>
            <person name="Maeda N."/>
            <person name="Oyama R."/>
            <person name="Ravasi T."/>
            <person name="Lenhard B."/>
            <person name="Wells C."/>
            <person name="Kodzius R."/>
            <person name="Shimokawa K."/>
            <person name="Bajic V.B."/>
            <person name="Brenner S.E."/>
            <person name="Batalov S."/>
            <person name="Forrest A.R."/>
            <person name="Zavolan M."/>
            <person name="Davis M.J."/>
            <person name="Wilming L.G."/>
            <person name="Aidinis V."/>
            <person name="Allen J.E."/>
            <person name="Ambesi-Impiombato A."/>
            <person name="Apweiler R."/>
            <person name="Aturaliya R.N."/>
            <person name="Bailey T.L."/>
            <person name="Bansal M."/>
            <person name="Baxter L."/>
            <person name="Beisel K.W."/>
            <person name="Bersano T."/>
            <person name="Bono H."/>
            <person name="Chalk A.M."/>
            <person name="Chiu K.P."/>
            <person name="Choudhary V."/>
            <person name="Christoffels A."/>
            <person name="Clutterbuck D.R."/>
            <person name="Crowe M.L."/>
            <person name="Dalla E."/>
            <person name="Dalrymple B.P."/>
            <person name="de Bono B."/>
            <person name="Della Gatta G."/>
            <person name="di Bernardo D."/>
            <person name="Down T."/>
            <person name="Engstrom P."/>
            <person name="Fagiolini M."/>
            <person name="Faulkner G."/>
            <person name="Fletcher C.F."/>
            <person name="Fukushima T."/>
            <person name="Furuno M."/>
            <person name="Futaki S."/>
            <person name="Gariboldi M."/>
            <person name="Georgii-Hemming P."/>
            <person name="Gingeras T.R."/>
            <person name="Gojobori T."/>
            <person name="Green R.E."/>
            <person name="Gustincich S."/>
            <person name="Harbers M."/>
            <person name="Hayashi Y."/>
            <person name="Hensch T.K."/>
            <person name="Hirokawa N."/>
            <person name="Hill D."/>
            <person name="Huminiecki L."/>
            <person name="Iacono M."/>
            <person name="Ikeo K."/>
            <person name="Iwama A."/>
            <person name="Ishikawa T."/>
            <person name="Jakt M."/>
            <person name="Kanapin A."/>
            <person name="Katoh M."/>
            <person name="Kawasawa Y."/>
            <person name="Kelso J."/>
            <person name="Kitamura H."/>
            <person name="Kitano H."/>
            <person name="Kollias G."/>
            <person name="Krishnan S.P."/>
            <person name="Kruger A."/>
            <person name="Kummerfeld S.K."/>
            <person name="Kurochkin I.V."/>
            <person name="Lareau L.F."/>
            <person name="Lazarevic D."/>
            <person name="Lipovich L."/>
            <person name="Liu J."/>
            <person name="Liuni S."/>
            <person name="McWilliam S."/>
            <person name="Madan Babu M."/>
            <person name="Madera M."/>
            <person name="Marchionni L."/>
            <person name="Matsuda H."/>
            <person name="Matsuzawa S."/>
            <person name="Miki H."/>
            <person name="Mignone F."/>
            <person name="Miyake S."/>
            <person name="Morris K."/>
            <person name="Mottagui-Tabar S."/>
            <person name="Mulder N."/>
            <person name="Nakano N."/>
            <person name="Nakauchi H."/>
            <person name="Ng P."/>
            <person name="Nilsson R."/>
            <person name="Nishiguchi S."/>
            <person name="Nishikawa S."/>
            <person name="Nori F."/>
            <person name="Ohara O."/>
            <person name="Okazaki Y."/>
            <person name="Orlando V."/>
            <person name="Pang K.C."/>
            <person name="Pavan W.J."/>
            <person name="Pavesi G."/>
            <person name="Pesole G."/>
            <person name="Petrovsky N."/>
            <person name="Piazza S."/>
            <person name="Reed J."/>
            <person name="Reid J.F."/>
            <person name="Ring B.Z."/>
            <person name="Ringwald M."/>
            <person name="Rost B."/>
            <person name="Ruan Y."/>
            <person name="Salzberg S.L."/>
            <person name="Sandelin A."/>
            <person name="Schneider C."/>
            <person name="Schoenbach C."/>
            <person name="Sekiguchi K."/>
            <person name="Semple C.A."/>
            <person name="Seno S."/>
            <person name="Sessa L."/>
            <person name="Sheng Y."/>
            <person name="Shibata Y."/>
            <person name="Shimada H."/>
            <person name="Shimada K."/>
            <person name="Silva D."/>
            <person name="Sinclair B."/>
            <person name="Sperling S."/>
            <person name="Stupka E."/>
            <person name="Sugiura K."/>
            <person name="Sultana R."/>
            <person name="Takenaka Y."/>
            <person name="Taki K."/>
            <person name="Tammoja K."/>
            <person name="Tan S.L."/>
            <person name="Tang S."/>
            <person name="Taylor M.S."/>
            <person name="Tegner J."/>
            <person name="Teichmann S.A."/>
            <person name="Ueda H.R."/>
            <person name="van Nimwegen E."/>
            <person name="Verardo R."/>
            <person name="Wei C.L."/>
            <person name="Yagi K."/>
            <person name="Yamanishi H."/>
            <person name="Zabarovsky E."/>
            <person name="Zhu S."/>
            <person name="Zimmer A."/>
            <person name="Hide W."/>
            <person name="Bult C."/>
            <person name="Grimmond S.M."/>
            <person name="Teasdale R.D."/>
            <person name="Liu E.T."/>
            <person name="Brusic V."/>
            <person name="Quackenbush J."/>
            <person name="Wahlestedt C."/>
            <person name="Mattick J.S."/>
            <person name="Hume D.A."/>
            <person name="Kai C."/>
            <person name="Sasaki D."/>
            <person name="Tomaru Y."/>
            <person name="Fukuda S."/>
            <person name="Kanamori-Katayama M."/>
            <person name="Suzuki M."/>
            <person name="Aoki J."/>
            <person name="Arakawa T."/>
            <person name="Iida J."/>
            <person name="Imamura K."/>
            <person name="Itoh M."/>
            <person name="Kato T."/>
            <person name="Kawaji H."/>
            <person name="Kawagashira N."/>
            <person name="Kawashima T."/>
            <person name="Kojima M."/>
            <person name="Kondo S."/>
            <person name="Konno H."/>
            <person name="Nakano K."/>
            <person name="Ninomiya N."/>
            <person name="Nishio T."/>
            <person name="Okada M."/>
            <person name="Plessy C."/>
            <person name="Shibata K."/>
            <person name="Shiraki T."/>
            <person name="Suzuki S."/>
            <person name="Tagami M."/>
            <person name="Waki K."/>
            <person name="Watahiki A."/>
            <person name="Okamura-Oho Y."/>
            <person name="Suzuki H."/>
            <person name="Kawai J."/>
            <person name="Hayashizaki Y."/>
        </authorList>
    </citation>
    <scope>NUCLEOTIDE SEQUENCE [LARGE SCALE MRNA]</scope>
    <source>
        <strain>C57BL/6J</strain>
        <tissue>Heart</tissue>
    </source>
</reference>
<reference key="4">
    <citation type="journal article" date="2009" name="PLoS Biol.">
        <title>Lineage-specific biology revealed by a finished genome assembly of the mouse.</title>
        <authorList>
            <person name="Church D.M."/>
            <person name="Goodstadt L."/>
            <person name="Hillier L.W."/>
            <person name="Zody M.C."/>
            <person name="Goldstein S."/>
            <person name="She X."/>
            <person name="Bult C.J."/>
            <person name="Agarwala R."/>
            <person name="Cherry J.L."/>
            <person name="DiCuccio M."/>
            <person name="Hlavina W."/>
            <person name="Kapustin Y."/>
            <person name="Meric P."/>
            <person name="Maglott D."/>
            <person name="Birtle Z."/>
            <person name="Marques A.C."/>
            <person name="Graves T."/>
            <person name="Zhou S."/>
            <person name="Teague B."/>
            <person name="Potamousis K."/>
            <person name="Churas C."/>
            <person name="Place M."/>
            <person name="Herschleb J."/>
            <person name="Runnheim R."/>
            <person name="Forrest D."/>
            <person name="Amos-Landgraf J."/>
            <person name="Schwartz D.C."/>
            <person name="Cheng Z."/>
            <person name="Lindblad-Toh K."/>
            <person name="Eichler E.E."/>
            <person name="Ponting C.P."/>
        </authorList>
    </citation>
    <scope>NUCLEOTIDE SEQUENCE [LARGE SCALE GENOMIC DNA]</scope>
    <source>
        <strain>C57BL/6J</strain>
    </source>
</reference>
<reference key="5">
    <citation type="submission" date="2005-07" db="EMBL/GenBank/DDBJ databases">
        <authorList>
            <person name="Mural R.J."/>
            <person name="Adams M.D."/>
            <person name="Myers E.W."/>
            <person name="Smith H.O."/>
            <person name="Venter J.C."/>
        </authorList>
    </citation>
    <scope>NUCLEOTIDE SEQUENCE [LARGE SCALE GENOMIC DNA]</scope>
</reference>
<reference key="6">
    <citation type="journal article" date="2004" name="Genome Res.">
        <title>The status, quality, and expansion of the NIH full-length cDNA project: the Mammalian Gene Collection (MGC).</title>
        <authorList>
            <consortium name="The MGC Project Team"/>
        </authorList>
    </citation>
    <scope>NUCLEOTIDE SEQUENCE [LARGE SCALE MRNA]</scope>
    <source>
        <strain>FVB/N</strain>
        <strain>FVB/N-3</strain>
        <tissue>Liver</tissue>
        <tissue>Mammary tumor</tissue>
    </source>
</reference>
<reference key="7">
    <citation type="journal article" date="2003" name="J. Mol. Biol.">
        <title>Interaction and assembly of murine pre-replicative complex proteins in yeast and mouse cells.</title>
        <authorList>
            <person name="Kneissl M."/>
            <person name="Puetter V."/>
            <person name="Szalay A.A."/>
            <person name="Grummt F."/>
        </authorList>
    </citation>
    <scope>INTERACTION WITH DBF4</scope>
</reference>